<feature type="chain" id="PRO_1000134186" description="ATP synthase gamma chain">
    <location>
        <begin position="1"/>
        <end position="290"/>
    </location>
</feature>
<name>ATPG_PHEZH</name>
<evidence type="ECO:0000255" key="1">
    <source>
        <dbReference type="HAMAP-Rule" id="MF_00815"/>
    </source>
</evidence>
<sequence length="290" mass="31107">MASLKEMRNRIGSVKATQKITKAMQMVAAAKLRKAQDAAQNARPYAQRMASVIANLAAGVSGDGAPKLLAGTGSDRRHLVVVATSDRGLAGGFNSAIVRAARERINALSAEGKDVRVITIGRKARDQLRRLAGERLVATYEAGSNPSLAVAEEVSARIQEMFEAGEVDVVHLVFSSFKSVVTQQPTVRQLIPAEVAAGQAPLDLKGATYEYEPDEEQILETLLPRNVTTQLLSATLENQAGFYAAQMTAMDNATRNAGDMIASLTLQYNRSRQAQITKELIEIISGAEAL</sequence>
<protein>
    <recommendedName>
        <fullName evidence="1">ATP synthase gamma chain</fullName>
    </recommendedName>
    <alternativeName>
        <fullName evidence="1">ATP synthase F1 sector gamma subunit</fullName>
    </alternativeName>
    <alternativeName>
        <fullName evidence="1">F-ATPase gamma subunit</fullName>
    </alternativeName>
</protein>
<dbReference type="EMBL" id="CP000747">
    <property type="protein sequence ID" value="ACG76650.1"/>
    <property type="molecule type" value="Genomic_DNA"/>
</dbReference>
<dbReference type="RefSeq" id="WP_012520798.1">
    <property type="nucleotide sequence ID" value="NC_011144.1"/>
</dbReference>
<dbReference type="SMR" id="B4RD46"/>
<dbReference type="STRING" id="450851.PHZ_c0236"/>
<dbReference type="KEGG" id="pzu:PHZ_c0236"/>
<dbReference type="eggNOG" id="COG0224">
    <property type="taxonomic scope" value="Bacteria"/>
</dbReference>
<dbReference type="HOGENOM" id="CLU_050669_0_1_5"/>
<dbReference type="OrthoDB" id="9812769at2"/>
<dbReference type="Proteomes" id="UP000001868">
    <property type="component" value="Chromosome"/>
</dbReference>
<dbReference type="GO" id="GO:0005886">
    <property type="term" value="C:plasma membrane"/>
    <property type="evidence" value="ECO:0007669"/>
    <property type="project" value="UniProtKB-SubCell"/>
</dbReference>
<dbReference type="GO" id="GO:0045259">
    <property type="term" value="C:proton-transporting ATP synthase complex"/>
    <property type="evidence" value="ECO:0007669"/>
    <property type="project" value="UniProtKB-KW"/>
</dbReference>
<dbReference type="GO" id="GO:0005524">
    <property type="term" value="F:ATP binding"/>
    <property type="evidence" value="ECO:0007669"/>
    <property type="project" value="UniProtKB-UniRule"/>
</dbReference>
<dbReference type="GO" id="GO:0046933">
    <property type="term" value="F:proton-transporting ATP synthase activity, rotational mechanism"/>
    <property type="evidence" value="ECO:0007669"/>
    <property type="project" value="UniProtKB-UniRule"/>
</dbReference>
<dbReference type="GO" id="GO:0042777">
    <property type="term" value="P:proton motive force-driven plasma membrane ATP synthesis"/>
    <property type="evidence" value="ECO:0007669"/>
    <property type="project" value="UniProtKB-UniRule"/>
</dbReference>
<dbReference type="CDD" id="cd12151">
    <property type="entry name" value="F1-ATPase_gamma"/>
    <property type="match status" value="1"/>
</dbReference>
<dbReference type="FunFam" id="1.10.287.80:FF:000001">
    <property type="entry name" value="ATP synthase gamma chain"/>
    <property type="match status" value="1"/>
</dbReference>
<dbReference type="FunFam" id="1.10.287.80:FF:000003">
    <property type="entry name" value="ATP synthase gamma chain, chloroplastic"/>
    <property type="match status" value="1"/>
</dbReference>
<dbReference type="Gene3D" id="3.40.1380.10">
    <property type="match status" value="1"/>
</dbReference>
<dbReference type="Gene3D" id="1.10.287.80">
    <property type="entry name" value="ATP synthase, gamma subunit, helix hairpin domain"/>
    <property type="match status" value="2"/>
</dbReference>
<dbReference type="HAMAP" id="MF_00815">
    <property type="entry name" value="ATP_synth_gamma_bact"/>
    <property type="match status" value="1"/>
</dbReference>
<dbReference type="InterPro" id="IPR035968">
    <property type="entry name" value="ATP_synth_F1_ATPase_gsu"/>
</dbReference>
<dbReference type="InterPro" id="IPR000131">
    <property type="entry name" value="ATP_synth_F1_gsu"/>
</dbReference>
<dbReference type="InterPro" id="IPR023632">
    <property type="entry name" value="ATP_synth_F1_gsu_CS"/>
</dbReference>
<dbReference type="NCBIfam" id="TIGR01146">
    <property type="entry name" value="ATPsyn_F1gamma"/>
    <property type="match status" value="1"/>
</dbReference>
<dbReference type="NCBIfam" id="NF004146">
    <property type="entry name" value="PRK05621.1-4"/>
    <property type="match status" value="1"/>
</dbReference>
<dbReference type="PANTHER" id="PTHR11693">
    <property type="entry name" value="ATP SYNTHASE GAMMA CHAIN"/>
    <property type="match status" value="1"/>
</dbReference>
<dbReference type="PANTHER" id="PTHR11693:SF22">
    <property type="entry name" value="ATP SYNTHASE SUBUNIT GAMMA, MITOCHONDRIAL"/>
    <property type="match status" value="1"/>
</dbReference>
<dbReference type="Pfam" id="PF00231">
    <property type="entry name" value="ATP-synt"/>
    <property type="match status" value="1"/>
</dbReference>
<dbReference type="PIRSF" id="PIRSF039089">
    <property type="entry name" value="ATP_synthase_gamma"/>
    <property type="match status" value="1"/>
</dbReference>
<dbReference type="PRINTS" id="PR00126">
    <property type="entry name" value="ATPASEGAMMA"/>
</dbReference>
<dbReference type="SUPFAM" id="SSF52943">
    <property type="entry name" value="ATP synthase (F1-ATPase), gamma subunit"/>
    <property type="match status" value="1"/>
</dbReference>
<dbReference type="PROSITE" id="PS00153">
    <property type="entry name" value="ATPASE_GAMMA"/>
    <property type="match status" value="1"/>
</dbReference>
<gene>
    <name evidence="1" type="primary">atpG</name>
    <name type="ordered locus">PHZ_c0236</name>
</gene>
<organism>
    <name type="scientific">Phenylobacterium zucineum (strain HLK1)</name>
    <dbReference type="NCBI Taxonomy" id="450851"/>
    <lineage>
        <taxon>Bacteria</taxon>
        <taxon>Pseudomonadati</taxon>
        <taxon>Pseudomonadota</taxon>
        <taxon>Alphaproteobacteria</taxon>
        <taxon>Caulobacterales</taxon>
        <taxon>Caulobacteraceae</taxon>
        <taxon>Phenylobacterium</taxon>
    </lineage>
</organism>
<proteinExistence type="inferred from homology"/>
<reference key="1">
    <citation type="journal article" date="2008" name="BMC Genomics">
        <title>Complete genome of Phenylobacterium zucineum - a novel facultative intracellular bacterium isolated from human erythroleukemia cell line K562.</title>
        <authorList>
            <person name="Luo Y."/>
            <person name="Xu X."/>
            <person name="Ding Z."/>
            <person name="Liu Z."/>
            <person name="Zhang B."/>
            <person name="Yan Z."/>
            <person name="Sun J."/>
            <person name="Hu S."/>
            <person name="Hu X."/>
        </authorList>
    </citation>
    <scope>NUCLEOTIDE SEQUENCE [LARGE SCALE GENOMIC DNA]</scope>
    <source>
        <strain>HLK1</strain>
    </source>
</reference>
<keyword id="KW-0066">ATP synthesis</keyword>
<keyword id="KW-0997">Cell inner membrane</keyword>
<keyword id="KW-1003">Cell membrane</keyword>
<keyword id="KW-0139">CF(1)</keyword>
<keyword id="KW-0375">Hydrogen ion transport</keyword>
<keyword id="KW-0406">Ion transport</keyword>
<keyword id="KW-0472">Membrane</keyword>
<keyword id="KW-1185">Reference proteome</keyword>
<keyword id="KW-0813">Transport</keyword>
<comment type="function">
    <text evidence="1">Produces ATP from ADP in the presence of a proton gradient across the membrane. The gamma chain is believed to be important in regulating ATPase activity and the flow of protons through the CF(0) complex.</text>
</comment>
<comment type="subunit">
    <text evidence="1">F-type ATPases have 2 components, CF(1) - the catalytic core - and CF(0) - the membrane proton channel. CF(1) has five subunits: alpha(3), beta(3), gamma(1), delta(1), epsilon(1). CF(0) has three main subunits: a, b and c.</text>
</comment>
<comment type="subcellular location">
    <subcellularLocation>
        <location evidence="1">Cell inner membrane</location>
        <topology evidence="1">Peripheral membrane protein</topology>
    </subcellularLocation>
</comment>
<comment type="similarity">
    <text evidence="1">Belongs to the ATPase gamma chain family.</text>
</comment>
<accession>B4RD46</accession>